<reference key="1">
    <citation type="journal article" date="2005" name="Biochemistry">
        <title>Genetic polymorphism and expression of a highly potent scorpion depressant toxin enable refinement of the effects on insect Na channels and illuminate the key role of Asn-58.</title>
        <authorList>
            <person name="Strugatsky D."/>
            <person name="Zilberberg N."/>
            <person name="Stankiewicz M."/>
            <person name="Ilan N."/>
            <person name="Turkov M."/>
            <person name="Cohen L."/>
            <person name="Pelhate M."/>
            <person name="Gilles N."/>
            <person name="Gordon D."/>
            <person name="Gurevitz M."/>
        </authorList>
    </citation>
    <scope>NUCLEOTIDE SEQUENCE [MRNA]</scope>
    <scope>PARTIAL PROTEIN SEQUENCE</scope>
    <scope>FUNCTION</scope>
    <scope>TOXIC DOSE</scope>
    <source>
        <tissue>Venom</tissue>
        <tissue>Venom gland</tissue>
    </source>
</reference>
<evidence type="ECO:0000250" key="1"/>
<evidence type="ECO:0000255" key="2">
    <source>
        <dbReference type="PROSITE-ProRule" id="PRU01210"/>
    </source>
</evidence>
<evidence type="ECO:0000269" key="3">
    <source>
    </source>
</evidence>
<evidence type="ECO:0000305" key="4"/>
<comment type="function">
    <text evidence="3">Depressant insect beta-toxins cause a transient contraction paralysis followed by a slow flaccid paralysis. They bind voltage-independently at site-4 of sodium channels (Nav) and block action potentials, primarily by depolarizing the axonal membrane and suppressing the sodium current. This depressant toxin is active only on insects. It is found in a relatively small amount in the venom.</text>
</comment>
<comment type="subcellular location">
    <subcellularLocation>
        <location>Secreted</location>
    </subcellularLocation>
</comment>
<comment type="tissue specificity">
    <text>Expressed by the venom gland.</text>
</comment>
<comment type="domain">
    <text evidence="4">Has the structural arrangement of an alpha-helix connected to antiparallel beta-sheets by disulfide bonds (CS-alpha/beta).</text>
</comment>
<comment type="toxic dose">
    <text evidence="3">PD(50) is 19 ng/100 mg of body weight of Sarcophaga larvae for contraction paralysis, and 85 ng/100 mg for flaccid paralysis.</text>
</comment>
<comment type="similarity">
    <text evidence="4">Belongs to the long (4 C-C) scorpion toxin superfamily. Sodium channel inhibitor family. Beta subfamily.</text>
</comment>
<proteinExistence type="evidence at protein level"/>
<feature type="signal peptide">
    <location>
        <begin position="1"/>
        <end position="21"/>
    </location>
</feature>
<feature type="chain" id="PRO_0000307617" description="Beta-insect depressant toxin Lqh-dprIT3g">
    <location>
        <begin position="22"/>
        <end position="82"/>
    </location>
</feature>
<feature type="domain" description="LCN-type CS-alpha/beta" evidence="2">
    <location>
        <begin position="22"/>
        <end position="82"/>
    </location>
</feature>
<feature type="modified residue" description="Glycine amide" evidence="1">
    <location>
        <position position="82"/>
    </location>
</feature>
<feature type="disulfide bond" evidence="2">
    <location>
        <begin position="31"/>
        <end position="81"/>
    </location>
</feature>
<feature type="disulfide bond" evidence="2">
    <location>
        <begin position="35"/>
        <end position="56"/>
    </location>
</feature>
<feature type="disulfide bond" evidence="2">
    <location>
        <begin position="42"/>
        <end position="63"/>
    </location>
</feature>
<feature type="disulfide bond" evidence="2">
    <location>
        <begin position="46"/>
        <end position="65"/>
    </location>
</feature>
<organism>
    <name type="scientific">Leiurus hebraeus</name>
    <name type="common">Hebrew deathstalker scorpion</name>
    <name type="synonym">Leiurus quinquestriatus hebraeus</name>
    <dbReference type="NCBI Taxonomy" id="2899558"/>
    <lineage>
        <taxon>Eukaryota</taxon>
        <taxon>Metazoa</taxon>
        <taxon>Ecdysozoa</taxon>
        <taxon>Arthropoda</taxon>
        <taxon>Chelicerata</taxon>
        <taxon>Arachnida</taxon>
        <taxon>Scorpiones</taxon>
        <taxon>Buthida</taxon>
        <taxon>Buthoidea</taxon>
        <taxon>Buthidae</taxon>
        <taxon>Leiurus</taxon>
    </lineage>
</organism>
<sequence length="85" mass="9218">MKLLLLLTISASMLIEGLVNADGYIRGGDGCKVSCVINHVFCDNECKAAGGSYGYCWGWGLACWCEGLPAEREWDYETDTCGGKK</sequence>
<protein>
    <recommendedName>
        <fullName>Beta-insect depressant toxin Lqh-dprIT3g</fullName>
    </recommendedName>
</protein>
<accession>P0C5I9</accession>
<dbReference type="SMR" id="P0C5I9"/>
<dbReference type="GO" id="GO:0005576">
    <property type="term" value="C:extracellular region"/>
    <property type="evidence" value="ECO:0007669"/>
    <property type="project" value="UniProtKB-SubCell"/>
</dbReference>
<dbReference type="GO" id="GO:0019871">
    <property type="term" value="F:sodium channel inhibitor activity"/>
    <property type="evidence" value="ECO:0007669"/>
    <property type="project" value="InterPro"/>
</dbReference>
<dbReference type="GO" id="GO:0090729">
    <property type="term" value="F:toxin activity"/>
    <property type="evidence" value="ECO:0007669"/>
    <property type="project" value="UniProtKB-KW"/>
</dbReference>
<dbReference type="GO" id="GO:0006952">
    <property type="term" value="P:defense response"/>
    <property type="evidence" value="ECO:0007669"/>
    <property type="project" value="InterPro"/>
</dbReference>
<dbReference type="CDD" id="cd23106">
    <property type="entry name" value="neurotoxins_LC_scorpion"/>
    <property type="match status" value="1"/>
</dbReference>
<dbReference type="Gene3D" id="3.30.30.10">
    <property type="entry name" value="Knottin, scorpion toxin-like"/>
    <property type="match status" value="1"/>
</dbReference>
<dbReference type="InterPro" id="IPR044062">
    <property type="entry name" value="LCN-type_CS_alpha_beta_dom"/>
</dbReference>
<dbReference type="InterPro" id="IPR003614">
    <property type="entry name" value="Scorpion_toxin-like"/>
</dbReference>
<dbReference type="InterPro" id="IPR036574">
    <property type="entry name" value="Scorpion_toxin-like_sf"/>
</dbReference>
<dbReference type="InterPro" id="IPR018218">
    <property type="entry name" value="Scorpion_toxinL"/>
</dbReference>
<dbReference type="InterPro" id="IPR002061">
    <property type="entry name" value="Scorpion_toxinL/defensin"/>
</dbReference>
<dbReference type="Pfam" id="PF00537">
    <property type="entry name" value="Toxin_3"/>
    <property type="match status" value="1"/>
</dbReference>
<dbReference type="PRINTS" id="PR00285">
    <property type="entry name" value="SCORPNTOXIN"/>
</dbReference>
<dbReference type="SMART" id="SM00505">
    <property type="entry name" value="Knot1"/>
    <property type="match status" value="1"/>
</dbReference>
<dbReference type="SUPFAM" id="SSF57095">
    <property type="entry name" value="Scorpion toxin-like"/>
    <property type="match status" value="1"/>
</dbReference>
<dbReference type="PROSITE" id="PS51863">
    <property type="entry name" value="LCN_CSAB"/>
    <property type="match status" value="1"/>
</dbReference>
<keyword id="KW-0027">Amidation</keyword>
<keyword id="KW-0903">Direct protein sequencing</keyword>
<keyword id="KW-1015">Disulfide bond</keyword>
<keyword id="KW-0872">Ion channel impairing toxin</keyword>
<keyword id="KW-0528">Neurotoxin</keyword>
<keyword id="KW-0964">Secreted</keyword>
<keyword id="KW-0732">Signal</keyword>
<keyword id="KW-0800">Toxin</keyword>
<keyword id="KW-0738">Voltage-gated sodium channel impairing toxin</keyword>
<name>SIX3G_LEIHE</name>